<sequence length="283" mass="31061">MEVNKTTESLFSAKVEHNHAQAESHEPRDQRDVKVFSLGGKSSSKQEKLDHGSGRTSSRHETSRSSKEGSIEDKSAEVSSREEEEENRDGFLSGGNLTAGVAFTDTPMAVASEVMIETNAVTMSQIDLQWVEQLVLSTVESLLVADVDGKQLVEIVLDNNSTVPEAFCGANLTLVQTGEDVAVTFSNFVDQDQVAEAMQLVQQNPEQLTSLVESLKSRQLNLTELVVGNVAVSLPVLEKVETPLHMIAATIRHHDQEGDQEGEGRQEQHQGRQQEKKLEEAQI</sequence>
<proteinExistence type="inferred from homology"/>
<dbReference type="EMBL" id="AE002160">
    <property type="protein sequence ID" value="AAF38933.1"/>
    <property type="molecule type" value="Genomic_DNA"/>
</dbReference>
<dbReference type="PIR" id="F81749">
    <property type="entry name" value="F81749"/>
</dbReference>
<dbReference type="RefSeq" id="WP_010229200.1">
    <property type="nucleotide sequence ID" value="NZ_CP063055.1"/>
</dbReference>
<dbReference type="SMR" id="Q9PLQ3"/>
<dbReference type="GeneID" id="1245567"/>
<dbReference type="KEGG" id="cmu:TC_0042"/>
<dbReference type="HOGENOM" id="CLU_985881_0_0_0"/>
<dbReference type="OrthoDB" id="17909at2"/>
<dbReference type="Proteomes" id="UP000000800">
    <property type="component" value="Chromosome"/>
</dbReference>
<dbReference type="InterPro" id="IPR035359">
    <property type="entry name" value="DUF5421"/>
</dbReference>
<dbReference type="Pfam" id="PF17458">
    <property type="entry name" value="DUF5421"/>
    <property type="match status" value="1"/>
</dbReference>
<name>Y042_CHLMU</name>
<accession>Q9PLQ3</accession>
<organism>
    <name type="scientific">Chlamydia muridarum (strain MoPn / Nigg)</name>
    <dbReference type="NCBI Taxonomy" id="243161"/>
    <lineage>
        <taxon>Bacteria</taxon>
        <taxon>Pseudomonadati</taxon>
        <taxon>Chlamydiota</taxon>
        <taxon>Chlamydiia</taxon>
        <taxon>Chlamydiales</taxon>
        <taxon>Chlamydiaceae</taxon>
        <taxon>Chlamydia/Chlamydophila group</taxon>
        <taxon>Chlamydia</taxon>
    </lineage>
</organism>
<protein>
    <recommendedName>
        <fullName>Uncharacterized protein TC_0042</fullName>
    </recommendedName>
</protein>
<reference key="1">
    <citation type="journal article" date="2000" name="Nucleic Acids Res.">
        <title>Genome sequences of Chlamydia trachomatis MoPn and Chlamydia pneumoniae AR39.</title>
        <authorList>
            <person name="Read T.D."/>
            <person name="Brunham R.C."/>
            <person name="Shen C."/>
            <person name="Gill S.R."/>
            <person name="Heidelberg J.F."/>
            <person name="White O."/>
            <person name="Hickey E.K."/>
            <person name="Peterson J.D."/>
            <person name="Utterback T.R."/>
            <person name="Berry K.J."/>
            <person name="Bass S."/>
            <person name="Linher K.D."/>
            <person name="Weidman J.F."/>
            <person name="Khouri H.M."/>
            <person name="Craven B."/>
            <person name="Bowman C."/>
            <person name="Dodson R.J."/>
            <person name="Gwinn M.L."/>
            <person name="Nelson W.C."/>
            <person name="DeBoy R.T."/>
            <person name="Kolonay J.F."/>
            <person name="McClarty G."/>
            <person name="Salzberg S.L."/>
            <person name="Eisen J.A."/>
            <person name="Fraser C.M."/>
        </authorList>
    </citation>
    <scope>NUCLEOTIDE SEQUENCE [LARGE SCALE GENOMIC DNA]</scope>
    <source>
        <strain>MoPn / Nigg</strain>
    </source>
</reference>
<comment type="similarity">
    <text evidence="2">Belongs to the chlamydial CPn_0705/CT_671/TC_0042 family.</text>
</comment>
<evidence type="ECO:0000256" key="1">
    <source>
        <dbReference type="SAM" id="MobiDB-lite"/>
    </source>
</evidence>
<evidence type="ECO:0000305" key="2"/>
<feature type="chain" id="PRO_0000218412" description="Uncharacterized protein TC_0042">
    <location>
        <begin position="1"/>
        <end position="283"/>
    </location>
</feature>
<feature type="region of interest" description="Disordered" evidence="1">
    <location>
        <begin position="1"/>
        <end position="96"/>
    </location>
</feature>
<feature type="region of interest" description="Disordered" evidence="1">
    <location>
        <begin position="255"/>
        <end position="283"/>
    </location>
</feature>
<feature type="compositionally biased region" description="Polar residues" evidence="1">
    <location>
        <begin position="1"/>
        <end position="10"/>
    </location>
</feature>
<feature type="compositionally biased region" description="Basic and acidic residues" evidence="1">
    <location>
        <begin position="14"/>
        <end position="34"/>
    </location>
</feature>
<feature type="compositionally biased region" description="Basic and acidic residues" evidence="1">
    <location>
        <begin position="44"/>
        <end position="81"/>
    </location>
</feature>
<gene>
    <name type="ordered locus">TC_0042</name>
</gene>